<gene>
    <name evidence="5" type="primary">echPT1</name>
</gene>
<keyword id="KW-0637">Prenyltransferase</keyword>
<keyword id="KW-0808">Transferase</keyword>
<protein>
    <recommendedName>
        <fullName evidence="5">Echinulin prenyltransferase 1</fullName>
        <shortName evidence="5">EchPT1</shortName>
        <ecNumber evidence="3 4">2.5.1.-</ecNumber>
    </recommendedName>
    <alternativeName>
        <fullName evidence="5">Echinulin biosynthesis cluster protein echPT1</fullName>
    </alternativeName>
</protein>
<sequence length="417" mass="47905">MPSEVLTSYYDYPTHDQEAWWRDTGPLFGRFLKGAGYDVHTQYQYLVFFIKNILPSLGPYPARWRSTITPTGLPIEYSLNFQLNSRPLLRIGFEPLSRFSGTPQDPYNKIAAADLLNQLSKLQLHEFDTQLFNHFTNEFELSKSESESLQKQGGINGKSTVRSQTAFGFDLKGGRVAVKGYAFAGLKNRATGTPVGQLISNSIRNLEPQMHCWDSFSILNSYMEESDGWNEYSFVSWDCVDIERSRLKLYGVHNAVTWDKVKEMWTLGGRIENNATIKTGLELLQHMWSLLQINEGDRDYKGGFAADNGGKTLPIIWNYELNKGSPHPAPKFYFPVHGENDLQVSKSISEFFTHLGWQDHARQYPHLLRQIYPNQNISQTERLQAWISFAYNERTGPYLSVYYYSAERPPWGSDQVK</sequence>
<comment type="function">
    <text evidence="1 3 4">Prenyltransferase; part of the gene cluster that mediates the biosynthesis of echinulin family alkaloid (PubMed:29072465, PubMed:33381959). The pathway begins with the biosynthesis of the cyclic dipeptide cyclo-L-Trp-L-Ala (cyclo-TA) by the NRPS echPS via condensation of L-alanine and L-tryptophan (By similarity). The prenyltransferase echPT1 then catalyzes the first prenylation step, a reverse prenylation reaction at C2, to yield preechinulin (PubMed:29072465, PubMed:33381959). Preechinulin is the substrate of the cytochrome P450 monooxygenase echP450 that catalyzes the formation of the double bond between C10 and C11 to produce neoechulin A (PubMed:33381959). The unique prenyltransferase echPT2 functions as a competitive enzyme with echP450 for preechinulin metabolization and uses preechinulin for effective regiospecific prenylations. Preechinulin is prenylated by echPT2 at C5 or C7. C7-prenylation leads to accumulation of tardioxopiperazine B without further modification by echPT2. In contrast, the C5-prenylated tardioxopiperazine A can be prenylated again by echPT2, predominantly at C7 to form echinulin or less frequently at C4 to give variecolorin L. EchPT2 also accepts neoechilunin A to produce varlecolorin G (prenylation at C5) or isoechinulin A (prenylation at C7). EchPT2 further converts isoechinulin A into dehydroechinulin. Moreover, a yet unidentified enzyme can also convert neoechilunin A into neoechilunin B by introducing a double bond between positions C14 and C17 and thus provides a further substrate to echPT2 for C5 and C7 prenylation (PubMed:29072465, PubMed:33381959).</text>
</comment>
<comment type="catalytic activity">
    <reaction evidence="3 4">
        <text>cyclo(L-tryptophyl-L-alanyl) + dimethylallyl diphosphate = preechinulin + diphosphate</text>
        <dbReference type="Rhea" id="RHEA:73767"/>
        <dbReference type="ChEBI" id="CHEBI:33019"/>
        <dbReference type="ChEBI" id="CHEBI:57623"/>
        <dbReference type="ChEBI" id="CHEBI:193002"/>
        <dbReference type="ChEBI" id="CHEBI:193003"/>
    </reaction>
    <physiologicalReaction direction="left-to-right" evidence="3 4">
        <dbReference type="Rhea" id="RHEA:73768"/>
    </physiologicalReaction>
</comment>
<comment type="biophysicochemical properties">
    <kinetics>
        <KM evidence="3">0.09 mM for cyclo-L-Trp-L-Ala</KM>
        <KM evidence="3">0.18 mM for dimethylallyl diphosphate (DMAPP)</KM>
    </kinetics>
</comment>
<comment type="pathway">
    <text evidence="3 4">Secondary metabolite biosynthesis.</text>
</comment>
<comment type="pathway">
    <text evidence="3 4">Alkaloid biosynthesis.</text>
</comment>
<comment type="similarity">
    <text evidence="6">Belongs to the tryptophan dimethylallyltransferase family.</text>
</comment>
<proteinExistence type="evidence at protein level"/>
<feature type="chain" id="PRO_0000457012" description="Echinulin prenyltransferase 1">
    <location>
        <begin position="1"/>
        <end position="417"/>
    </location>
</feature>
<feature type="binding site" evidence="2">
    <location>
        <position position="90"/>
    </location>
    <ligand>
        <name>dimethylallyl diphosphate</name>
        <dbReference type="ChEBI" id="CHEBI:57623"/>
    </ligand>
</feature>
<feature type="binding site" evidence="2">
    <location>
        <position position="179"/>
    </location>
    <ligand>
        <name>dimethylallyl diphosphate</name>
        <dbReference type="ChEBI" id="CHEBI:57623"/>
    </ligand>
</feature>
<feature type="binding site" evidence="2">
    <location>
        <position position="181"/>
    </location>
    <ligand>
        <name>dimethylallyl diphosphate</name>
        <dbReference type="ChEBI" id="CHEBI:57623"/>
    </ligand>
</feature>
<feature type="binding site" evidence="2">
    <location>
        <position position="248"/>
    </location>
    <ligand>
        <name>dimethylallyl diphosphate</name>
        <dbReference type="ChEBI" id="CHEBI:57623"/>
    </ligand>
</feature>
<feature type="binding site" evidence="2">
    <location>
        <position position="250"/>
    </location>
    <ligand>
        <name>dimethylallyl diphosphate</name>
        <dbReference type="ChEBI" id="CHEBI:57623"/>
    </ligand>
</feature>
<feature type="binding site" evidence="2">
    <location>
        <position position="333"/>
    </location>
    <ligand>
        <name>dimethylallyl diphosphate</name>
        <dbReference type="ChEBI" id="CHEBI:57623"/>
    </ligand>
</feature>
<feature type="binding site" evidence="2">
    <location>
        <position position="398"/>
    </location>
    <ligand>
        <name>dimethylallyl diphosphate</name>
        <dbReference type="ChEBI" id="CHEBI:57623"/>
    </ligand>
</feature>
<feature type="binding site" evidence="2">
    <location>
        <position position="402"/>
    </location>
    <ligand>
        <name>dimethylallyl diphosphate</name>
        <dbReference type="ChEBI" id="CHEBI:57623"/>
    </ligand>
</feature>
<feature type="site" description="Required for regioselectivity" evidence="2">
    <location>
        <position position="92"/>
    </location>
</feature>
<organism>
    <name type="scientific">Aspergillus ruber</name>
    <name type="common">Eurotium rubrum</name>
    <dbReference type="NCBI Taxonomy" id="396024"/>
    <lineage>
        <taxon>Eukaryota</taxon>
        <taxon>Fungi</taxon>
        <taxon>Dikarya</taxon>
        <taxon>Ascomycota</taxon>
        <taxon>Pezizomycotina</taxon>
        <taxon>Eurotiomycetes</taxon>
        <taxon>Eurotiomycetidae</taxon>
        <taxon>Eurotiales</taxon>
        <taxon>Aspergillaceae</taxon>
        <taxon>Aspergillus</taxon>
        <taxon>Aspergillus subgen. Aspergillus</taxon>
    </lineage>
</organism>
<dbReference type="EC" id="2.5.1.-" evidence="3 4"/>
<dbReference type="EMBL" id="MF538774">
    <property type="protein sequence ID" value="ATP76206.1"/>
    <property type="molecule type" value="Genomic_DNA"/>
</dbReference>
<dbReference type="SMR" id="A0A2D1VNJ8"/>
<dbReference type="GO" id="GO:0004659">
    <property type="term" value="F:prenyltransferase activity"/>
    <property type="evidence" value="ECO:0007669"/>
    <property type="project" value="UniProtKB-KW"/>
</dbReference>
<dbReference type="GO" id="GO:0009820">
    <property type="term" value="P:alkaloid metabolic process"/>
    <property type="evidence" value="ECO:0007669"/>
    <property type="project" value="InterPro"/>
</dbReference>
<dbReference type="CDD" id="cd13929">
    <property type="entry name" value="PT-DMATS_CymD"/>
    <property type="match status" value="1"/>
</dbReference>
<dbReference type="InterPro" id="IPR033964">
    <property type="entry name" value="Aro_prenylTrfase"/>
</dbReference>
<dbReference type="InterPro" id="IPR017795">
    <property type="entry name" value="Aro_prenylTrfase_DMATS"/>
</dbReference>
<dbReference type="InterPro" id="IPR012148">
    <property type="entry name" value="DMATS-type_fun"/>
</dbReference>
<dbReference type="NCBIfam" id="TIGR03429">
    <property type="entry name" value="arom_pren_DMATS"/>
    <property type="match status" value="1"/>
</dbReference>
<dbReference type="PANTHER" id="PTHR40627">
    <property type="entry name" value="INDOLE PRENYLTRANSFERASE TDIB-RELATED"/>
    <property type="match status" value="1"/>
</dbReference>
<dbReference type="PANTHER" id="PTHR40627:SF3">
    <property type="entry name" value="PRENYLTRANSFERASE ASQH2-RELATED"/>
    <property type="match status" value="1"/>
</dbReference>
<dbReference type="Pfam" id="PF11991">
    <property type="entry name" value="Trp_DMAT"/>
    <property type="match status" value="1"/>
</dbReference>
<dbReference type="PIRSF" id="PIRSF000509">
    <property type="entry name" value="Trp_DMAT"/>
    <property type="match status" value="1"/>
</dbReference>
<dbReference type="SFLD" id="SFLDS00036">
    <property type="entry name" value="Aromatic_Prenyltransferase"/>
    <property type="match status" value="1"/>
</dbReference>
<dbReference type="SFLD" id="SFLDG01162">
    <property type="entry name" value="I"/>
    <property type="match status" value="1"/>
</dbReference>
<name>PT1_ASPRB</name>
<accession>A0A2D1VNJ8</accession>
<evidence type="ECO:0000250" key="1">
    <source>
        <dbReference type="UniProtKB" id="A0A1E3B0T2"/>
    </source>
</evidence>
<evidence type="ECO:0000250" key="2">
    <source>
        <dbReference type="UniProtKB" id="Q4WAW7"/>
    </source>
</evidence>
<evidence type="ECO:0000269" key="3">
    <source>
    </source>
</evidence>
<evidence type="ECO:0000269" key="4">
    <source>
    </source>
</evidence>
<evidence type="ECO:0000303" key="5">
    <source>
    </source>
</evidence>
<evidence type="ECO:0000305" key="6"/>
<reference key="1">
    <citation type="journal article" date="2017" name="Org. Lett.">
        <title>Two prenyltransferases govern a consecutive prenylation cascade in the biosynthesis of echinulin and neoechinulin.</title>
        <authorList>
            <person name="Wohlgemuth V."/>
            <person name="Kindinger F."/>
            <person name="Xie X."/>
            <person name="Wang B.G."/>
            <person name="Li S.M."/>
        </authorList>
    </citation>
    <scope>NUCLEOTIDE SEQUENCE [GENOMIC DNA]</scope>
    <scope>FUNCTION</scope>
    <scope>CATALYTIC ACTIVITY</scope>
    <scope>BIOPHYSICOCHEMICAL PROPERTIES</scope>
    <scope>PATHWAY</scope>
    <source>
        <strain>QEN-0407-G2</strain>
    </source>
</reference>
<reference key="2">
    <citation type="journal article" date="2021" name="ACS Chem. Biol.">
        <title>Prenylation and dehydrogenation of a C2-reversely prenylated diketopiperazine as a branching point in the biosynthesis of echinulin family alkaloids in Aspergillus ruber.</title>
        <authorList>
            <person name="Nies J."/>
            <person name="Li S.M."/>
        </authorList>
    </citation>
    <scope>FUNCTION</scope>
    <scope>CATALYTIC ACTIVITY</scope>
    <scope>PATHWAY</scope>
</reference>